<dbReference type="EC" id="5.4.3.8" evidence="1"/>
<dbReference type="EMBL" id="AE017194">
    <property type="protein sequence ID" value="AAS43453.1"/>
    <property type="molecule type" value="Genomic_DNA"/>
</dbReference>
<dbReference type="SMR" id="Q72ZW5"/>
<dbReference type="KEGG" id="bca:BCE_4552"/>
<dbReference type="HOGENOM" id="CLU_016922_1_5_9"/>
<dbReference type="UniPathway" id="UPA00251">
    <property type="reaction ID" value="UER00317"/>
</dbReference>
<dbReference type="Proteomes" id="UP000002527">
    <property type="component" value="Chromosome"/>
</dbReference>
<dbReference type="GO" id="GO:0005737">
    <property type="term" value="C:cytoplasm"/>
    <property type="evidence" value="ECO:0007669"/>
    <property type="project" value="UniProtKB-SubCell"/>
</dbReference>
<dbReference type="GO" id="GO:0042286">
    <property type="term" value="F:glutamate-1-semialdehyde 2,1-aminomutase activity"/>
    <property type="evidence" value="ECO:0007669"/>
    <property type="project" value="UniProtKB-UniRule"/>
</dbReference>
<dbReference type="GO" id="GO:0030170">
    <property type="term" value="F:pyridoxal phosphate binding"/>
    <property type="evidence" value="ECO:0007669"/>
    <property type="project" value="InterPro"/>
</dbReference>
<dbReference type="GO" id="GO:0008483">
    <property type="term" value="F:transaminase activity"/>
    <property type="evidence" value="ECO:0007669"/>
    <property type="project" value="InterPro"/>
</dbReference>
<dbReference type="GO" id="GO:0006782">
    <property type="term" value="P:protoporphyrinogen IX biosynthetic process"/>
    <property type="evidence" value="ECO:0007669"/>
    <property type="project" value="UniProtKB-UniRule"/>
</dbReference>
<dbReference type="CDD" id="cd00610">
    <property type="entry name" value="OAT_like"/>
    <property type="match status" value="1"/>
</dbReference>
<dbReference type="FunFam" id="3.40.640.10:FF:000021">
    <property type="entry name" value="Glutamate-1-semialdehyde 2,1-aminomutase"/>
    <property type="match status" value="1"/>
</dbReference>
<dbReference type="Gene3D" id="3.90.1150.10">
    <property type="entry name" value="Aspartate Aminotransferase, domain 1"/>
    <property type="match status" value="1"/>
</dbReference>
<dbReference type="Gene3D" id="3.40.640.10">
    <property type="entry name" value="Type I PLP-dependent aspartate aminotransferase-like (Major domain)"/>
    <property type="match status" value="1"/>
</dbReference>
<dbReference type="HAMAP" id="MF_00375">
    <property type="entry name" value="HemL_aminotrans_3"/>
    <property type="match status" value="1"/>
</dbReference>
<dbReference type="InterPro" id="IPR004639">
    <property type="entry name" value="4pyrrol_synth_GluAld_NH2Trfase"/>
</dbReference>
<dbReference type="InterPro" id="IPR005814">
    <property type="entry name" value="Aminotrans_3"/>
</dbReference>
<dbReference type="InterPro" id="IPR049704">
    <property type="entry name" value="Aminotrans_3_PPA_site"/>
</dbReference>
<dbReference type="InterPro" id="IPR015424">
    <property type="entry name" value="PyrdxlP-dep_Trfase"/>
</dbReference>
<dbReference type="InterPro" id="IPR015421">
    <property type="entry name" value="PyrdxlP-dep_Trfase_major"/>
</dbReference>
<dbReference type="InterPro" id="IPR015422">
    <property type="entry name" value="PyrdxlP-dep_Trfase_small"/>
</dbReference>
<dbReference type="NCBIfam" id="TIGR00713">
    <property type="entry name" value="hemL"/>
    <property type="match status" value="1"/>
</dbReference>
<dbReference type="NCBIfam" id="NF000818">
    <property type="entry name" value="PRK00062.1"/>
    <property type="match status" value="1"/>
</dbReference>
<dbReference type="PANTHER" id="PTHR43713">
    <property type="entry name" value="GLUTAMATE-1-SEMIALDEHYDE 2,1-AMINOMUTASE"/>
    <property type="match status" value="1"/>
</dbReference>
<dbReference type="PANTHER" id="PTHR43713:SF3">
    <property type="entry name" value="GLUTAMATE-1-SEMIALDEHYDE 2,1-AMINOMUTASE 1, CHLOROPLASTIC-RELATED"/>
    <property type="match status" value="1"/>
</dbReference>
<dbReference type="Pfam" id="PF00202">
    <property type="entry name" value="Aminotran_3"/>
    <property type="match status" value="1"/>
</dbReference>
<dbReference type="SUPFAM" id="SSF53383">
    <property type="entry name" value="PLP-dependent transferases"/>
    <property type="match status" value="1"/>
</dbReference>
<dbReference type="PROSITE" id="PS00600">
    <property type="entry name" value="AA_TRANSFER_CLASS_3"/>
    <property type="match status" value="1"/>
</dbReference>
<accession>Q72ZW5</accession>
<feature type="chain" id="PRO_0000243539" description="Glutamate-1-semialdehyde 2,1-aminomutase 2">
    <location>
        <begin position="1"/>
        <end position="429"/>
    </location>
</feature>
<feature type="modified residue" description="N6-(pyridoxal phosphate)lysine" evidence="1">
    <location>
        <position position="268"/>
    </location>
</feature>
<reference key="1">
    <citation type="journal article" date="2004" name="Nucleic Acids Res.">
        <title>The genome sequence of Bacillus cereus ATCC 10987 reveals metabolic adaptations and a large plasmid related to Bacillus anthracis pXO1.</title>
        <authorList>
            <person name="Rasko D.A."/>
            <person name="Ravel J."/>
            <person name="Oekstad O.A."/>
            <person name="Helgason E."/>
            <person name="Cer R.Z."/>
            <person name="Jiang L."/>
            <person name="Shores K.A."/>
            <person name="Fouts D.E."/>
            <person name="Tourasse N.J."/>
            <person name="Angiuoli S.V."/>
            <person name="Kolonay J.F."/>
            <person name="Nelson W.C."/>
            <person name="Kolstoe A.-B."/>
            <person name="Fraser C.M."/>
            <person name="Read T.D."/>
        </authorList>
    </citation>
    <scope>NUCLEOTIDE SEQUENCE [LARGE SCALE GENOMIC DNA]</scope>
    <source>
        <strain>ATCC 10987 / NRS 248</strain>
    </source>
</reference>
<keyword id="KW-0963">Cytoplasm</keyword>
<keyword id="KW-0413">Isomerase</keyword>
<keyword id="KW-0627">Porphyrin biosynthesis</keyword>
<keyword id="KW-0663">Pyridoxal phosphate</keyword>
<evidence type="ECO:0000255" key="1">
    <source>
        <dbReference type="HAMAP-Rule" id="MF_00375"/>
    </source>
</evidence>
<name>GSA2_BACC1</name>
<protein>
    <recommendedName>
        <fullName evidence="1">Glutamate-1-semialdehyde 2,1-aminomutase 2</fullName>
        <shortName evidence="1">GSA 2</shortName>
        <ecNumber evidence="1">5.4.3.8</ecNumber>
    </recommendedName>
    <alternativeName>
        <fullName evidence="1">Glutamate-1-semialdehyde aminotransferase 2</fullName>
        <shortName evidence="1">GSA-AT 2</shortName>
    </alternativeName>
</protein>
<proteinExistence type="inferred from homology"/>
<comment type="catalytic activity">
    <reaction evidence="1">
        <text>(S)-4-amino-5-oxopentanoate = 5-aminolevulinate</text>
        <dbReference type="Rhea" id="RHEA:14265"/>
        <dbReference type="ChEBI" id="CHEBI:57501"/>
        <dbReference type="ChEBI" id="CHEBI:356416"/>
        <dbReference type="EC" id="5.4.3.8"/>
    </reaction>
</comment>
<comment type="cofactor">
    <cofactor evidence="1">
        <name>pyridoxal 5'-phosphate</name>
        <dbReference type="ChEBI" id="CHEBI:597326"/>
    </cofactor>
</comment>
<comment type="pathway">
    <text evidence="1">Porphyrin-containing compound metabolism; protoporphyrin-IX biosynthesis; 5-aminolevulinate from L-glutamyl-tRNA(Glu): step 2/2.</text>
</comment>
<comment type="subunit">
    <text evidence="1">Homodimer.</text>
</comment>
<comment type="subcellular location">
    <subcellularLocation>
        <location evidence="1">Cytoplasm</location>
    </subcellularLocation>
</comment>
<comment type="similarity">
    <text evidence="1">Belongs to the class-III pyridoxal-phosphate-dependent aminotransferase family. HemL subfamily.</text>
</comment>
<gene>
    <name evidence="1" type="primary">hemL2</name>
    <name type="ordered locus">BCE_4552</name>
</gene>
<organism>
    <name type="scientific">Bacillus cereus (strain ATCC 10987 / NRS 248)</name>
    <dbReference type="NCBI Taxonomy" id="222523"/>
    <lineage>
        <taxon>Bacteria</taxon>
        <taxon>Bacillati</taxon>
        <taxon>Bacillota</taxon>
        <taxon>Bacilli</taxon>
        <taxon>Bacillales</taxon>
        <taxon>Bacillaceae</taxon>
        <taxon>Bacillus</taxon>
        <taxon>Bacillus cereus group</taxon>
    </lineage>
</organism>
<sequence length="429" mass="45976">MKKFDKSIAAFEEAQDLMPGGVNSPVRAFKSVGMNPLFMERGKGSKVYDIDGNEYIDYVLSWGPLIHGHANNRVVEALKAVAEKGTSFGAPTEIENKLAKLVIERVPSIEIVRMVNSGTEATMSALRLARGYTGRNKILKFIGCYHGHGDSLLIKAGSGVATLGLPDSPGVPEGVAKNTITVAYNDLESVKYAFEQFGDDIACVIVEPVAGNMGVVPPQPGFLEGLREVTEQNGALLIFDEVMTGFRVAYNCGQGYYGVTPDLTCLGKVIGGGLPVGAYGGKAEIMRQVAPSGPIYQAGTLSGNPLAMAAGYETLVQLTPESYVEFERKAEMLEAGLRKAAEKHGIPHHINRAGSMIGIFFTDEPVINYDAAKSSNLEFFAAYYREMVEQGVFLPPSQFEGLFLSTAHSDADIEATIAAAEIAMSKLKA</sequence>